<keyword id="KW-1003">Cell membrane</keyword>
<keyword id="KW-0963">Cytoplasm</keyword>
<keyword id="KW-0342">GTP-binding</keyword>
<keyword id="KW-0449">Lipoprotein</keyword>
<keyword id="KW-0472">Membrane</keyword>
<keyword id="KW-0519">Myristate</keyword>
<keyword id="KW-0547">Nucleotide-binding</keyword>
<keyword id="KW-0539">Nucleus</keyword>
<keyword id="KW-1185">Reference proteome</keyword>
<protein>
    <recommendedName>
        <fullName>ADP-ribosylation factor-like protein 4A</fullName>
    </recommendedName>
</protein>
<reference key="1">
    <citation type="journal article" date="1994" name="J. Biol. Chem.">
        <title>Cloning of two novel ADP-ribosylation factor-like proteins and characterization of their differential expression in 3T3-L1 cells.</title>
        <authorList>
            <person name="Schuermann A."/>
            <person name="Breiner M."/>
            <person name="Becker W."/>
            <person name="Huppertz C."/>
            <person name="Kaninulainen H."/>
            <person name="Kentrup H."/>
            <person name="Joost H.-G."/>
        </authorList>
    </citation>
    <scope>NUCLEOTIDE SEQUENCE [MRNA]</scope>
    <source>
        <strain>Sprague-Dawley</strain>
        <tissue>Adipose tissue</tissue>
    </source>
</reference>
<reference key="2">
    <citation type="journal article" date="2004" name="Genome Res.">
        <title>The status, quality, and expansion of the NIH full-length cDNA project: the Mammalian Gene Collection (MGC).</title>
        <authorList>
            <consortium name="The MGC Project Team"/>
        </authorList>
    </citation>
    <scope>NUCLEOTIDE SEQUENCE [LARGE SCALE MRNA]</scope>
    <source>
        <tissue>Spleen</tissue>
    </source>
</reference>
<reference key="3">
    <citation type="journal article" date="2000" name="J. Biol. Chem.">
        <title>ARL4, an ARF-like protein that is developmentally regulated and localized to nuclei and nucleoli.</title>
        <authorList>
            <person name="Lin C.Y."/>
            <person name="Huang P.H."/>
            <person name="Liao W.L."/>
            <person name="Cheng H.J."/>
            <person name="Huang C.F."/>
            <person name="Kuo J.C."/>
            <person name="Patton W.A."/>
            <person name="Massenburg D."/>
            <person name="Moss J."/>
            <person name="Lee F.J."/>
        </authorList>
    </citation>
    <scope>TISSUE SPECIFICITY</scope>
</reference>
<gene>
    <name type="primary">Arl4a</name>
    <name type="synonym">Arl4</name>
</gene>
<feature type="initiator methionine" description="Removed" evidence="2">
    <location>
        <position position="1"/>
    </location>
</feature>
<feature type="chain" id="PRO_0000207461" description="ADP-ribosylation factor-like protein 4A">
    <location>
        <begin position="2"/>
        <end position="200"/>
    </location>
</feature>
<feature type="binding site" evidence="1">
    <location>
        <begin position="27"/>
        <end position="34"/>
    </location>
    <ligand>
        <name>GTP</name>
        <dbReference type="ChEBI" id="CHEBI:37565"/>
    </ligand>
</feature>
<feature type="binding site" evidence="1">
    <location>
        <begin position="75"/>
        <end position="79"/>
    </location>
    <ligand>
        <name>GTP</name>
        <dbReference type="ChEBI" id="CHEBI:37565"/>
    </ligand>
</feature>
<feature type="binding site" evidence="1">
    <location>
        <begin position="134"/>
        <end position="137"/>
    </location>
    <ligand>
        <name>GTP</name>
        <dbReference type="ChEBI" id="CHEBI:37565"/>
    </ligand>
</feature>
<feature type="lipid moiety-binding region" description="N-myristoyl glycine" evidence="2">
    <location>
        <position position="2"/>
    </location>
</feature>
<dbReference type="EMBL" id="X77235">
    <property type="protein sequence ID" value="CAA54452.1"/>
    <property type="molecule type" value="mRNA"/>
</dbReference>
<dbReference type="EMBL" id="BC088148">
    <property type="protein sequence ID" value="AAH88148.1"/>
    <property type="molecule type" value="mRNA"/>
</dbReference>
<dbReference type="PIR" id="B54022">
    <property type="entry name" value="B54022"/>
</dbReference>
<dbReference type="RefSeq" id="NP_062059.1">
    <property type="nucleotide sequence ID" value="NM_019186.1"/>
</dbReference>
<dbReference type="RefSeq" id="XP_006240113.1">
    <property type="nucleotide sequence ID" value="XM_006240051.4"/>
</dbReference>
<dbReference type="RefSeq" id="XP_006240114.1">
    <property type="nucleotide sequence ID" value="XM_006240052.5"/>
</dbReference>
<dbReference type="SMR" id="P61214"/>
<dbReference type="FunCoup" id="P61214">
    <property type="interactions" value="835"/>
</dbReference>
<dbReference type="STRING" id="10116.ENSRNOP00000005800"/>
<dbReference type="PhosphoSitePlus" id="P61214"/>
<dbReference type="PaxDb" id="10116-ENSRNOP00000005800"/>
<dbReference type="Ensembl" id="ENSRNOT00000108440.1">
    <property type="protein sequence ID" value="ENSRNOP00000084810.1"/>
    <property type="gene ID" value="ENSRNOG00000069300.1"/>
</dbReference>
<dbReference type="Ensembl" id="ENSRNOT00000118685.1">
    <property type="protein sequence ID" value="ENSRNOP00000089325.1"/>
    <property type="gene ID" value="ENSRNOG00000069300.1"/>
</dbReference>
<dbReference type="GeneID" id="29308"/>
<dbReference type="KEGG" id="rno:29308"/>
<dbReference type="UCSC" id="RGD:2152">
    <property type="organism name" value="rat"/>
</dbReference>
<dbReference type="AGR" id="RGD:2152"/>
<dbReference type="CTD" id="10124"/>
<dbReference type="RGD" id="2152">
    <property type="gene designation" value="Arl4a"/>
</dbReference>
<dbReference type="eggNOG" id="KOG0070">
    <property type="taxonomic scope" value="Eukaryota"/>
</dbReference>
<dbReference type="GeneTree" id="ENSGT00940000154546"/>
<dbReference type="HOGENOM" id="CLU_040729_9_3_1"/>
<dbReference type="InParanoid" id="P61214"/>
<dbReference type="OMA" id="ETKQNWH"/>
<dbReference type="OrthoDB" id="2011769at2759"/>
<dbReference type="PhylomeDB" id="P61214"/>
<dbReference type="TreeFam" id="TF105464"/>
<dbReference type="PRO" id="PR:P61214"/>
<dbReference type="Proteomes" id="UP000002494">
    <property type="component" value="Chromosome 6"/>
</dbReference>
<dbReference type="Bgee" id="ENSRNOG00000004282">
    <property type="expression patterns" value="Expressed in testis and 20 other cell types or tissues"/>
</dbReference>
<dbReference type="GO" id="GO:0005737">
    <property type="term" value="C:cytoplasm"/>
    <property type="evidence" value="ECO:0000318"/>
    <property type="project" value="GO_Central"/>
</dbReference>
<dbReference type="GO" id="GO:0005730">
    <property type="term" value="C:nucleolus"/>
    <property type="evidence" value="ECO:0000250"/>
    <property type="project" value="UniProtKB"/>
</dbReference>
<dbReference type="GO" id="GO:0005634">
    <property type="term" value="C:nucleus"/>
    <property type="evidence" value="ECO:0000250"/>
    <property type="project" value="UniProtKB"/>
</dbReference>
<dbReference type="GO" id="GO:0005886">
    <property type="term" value="C:plasma membrane"/>
    <property type="evidence" value="ECO:0000250"/>
    <property type="project" value="UniProtKB"/>
</dbReference>
<dbReference type="GO" id="GO:0005525">
    <property type="term" value="F:GTP binding"/>
    <property type="evidence" value="ECO:0000250"/>
    <property type="project" value="UniProtKB"/>
</dbReference>
<dbReference type="GO" id="GO:0003924">
    <property type="term" value="F:GTPase activity"/>
    <property type="evidence" value="ECO:0007669"/>
    <property type="project" value="InterPro"/>
</dbReference>
<dbReference type="GO" id="GO:0050873">
    <property type="term" value="P:brown fat cell differentiation"/>
    <property type="evidence" value="ECO:0000266"/>
    <property type="project" value="RGD"/>
</dbReference>
<dbReference type="GO" id="GO:0006886">
    <property type="term" value="P:intracellular protein transport"/>
    <property type="evidence" value="ECO:0000318"/>
    <property type="project" value="GO_Central"/>
</dbReference>
<dbReference type="GO" id="GO:0016192">
    <property type="term" value="P:vesicle-mediated transport"/>
    <property type="evidence" value="ECO:0000318"/>
    <property type="project" value="GO_Central"/>
</dbReference>
<dbReference type="CDD" id="cd04152">
    <property type="entry name" value="Arl4_Arl7"/>
    <property type="match status" value="1"/>
</dbReference>
<dbReference type="FunFam" id="3.40.50.300:FF:000658">
    <property type="entry name" value="ADP-ribosylation factor-like protein 4A"/>
    <property type="match status" value="1"/>
</dbReference>
<dbReference type="Gene3D" id="3.40.50.300">
    <property type="entry name" value="P-loop containing nucleotide triphosphate hydrolases"/>
    <property type="match status" value="1"/>
</dbReference>
<dbReference type="InterPro" id="IPR027417">
    <property type="entry name" value="P-loop_NTPase"/>
</dbReference>
<dbReference type="InterPro" id="IPR005225">
    <property type="entry name" value="Small_GTP-bd"/>
</dbReference>
<dbReference type="InterPro" id="IPR024156">
    <property type="entry name" value="Small_GTPase_ARF"/>
</dbReference>
<dbReference type="InterPro" id="IPR006689">
    <property type="entry name" value="Small_GTPase_ARF/SAR"/>
</dbReference>
<dbReference type="NCBIfam" id="TIGR00231">
    <property type="entry name" value="small_GTP"/>
    <property type="match status" value="1"/>
</dbReference>
<dbReference type="PANTHER" id="PTHR11711">
    <property type="entry name" value="ADP RIBOSYLATION FACTOR-RELATED"/>
    <property type="match status" value="1"/>
</dbReference>
<dbReference type="Pfam" id="PF00025">
    <property type="entry name" value="Arf"/>
    <property type="match status" value="1"/>
</dbReference>
<dbReference type="PRINTS" id="PR00449">
    <property type="entry name" value="RASTRNSFRMNG"/>
</dbReference>
<dbReference type="SMART" id="SM00177">
    <property type="entry name" value="ARF"/>
    <property type="match status" value="1"/>
</dbReference>
<dbReference type="SMART" id="SM00175">
    <property type="entry name" value="RAB"/>
    <property type="match status" value="1"/>
</dbReference>
<dbReference type="SMART" id="SM00173">
    <property type="entry name" value="RAS"/>
    <property type="match status" value="1"/>
</dbReference>
<dbReference type="SMART" id="SM00178">
    <property type="entry name" value="SAR"/>
    <property type="match status" value="1"/>
</dbReference>
<dbReference type="SUPFAM" id="SSF52540">
    <property type="entry name" value="P-loop containing nucleoside triphosphate hydrolases"/>
    <property type="match status" value="1"/>
</dbReference>
<dbReference type="PROSITE" id="PS51417">
    <property type="entry name" value="ARF"/>
    <property type="match status" value="1"/>
</dbReference>
<name>ARL4A_RAT</name>
<comment type="function">
    <text evidence="1">Small GTP-binding protein which cycles between an inactive GDP-bound and an active GTP-bound form, and the rate of cycling is regulated by guanine nucleotide exchange factors (GEF) and GTPase-activating proteins (GAP). GTP-binding protein that does not act as an allosteric activator of the cholera toxin catalytic subunit. Recruits CYTH1, CYTH2, CYTH3 and CYTH4 to the plasma membrane in GDP-bound form (By similarity).</text>
</comment>
<comment type="subunit">
    <text evidence="1">Interacts with CYTH2. Interacts with KPNA2; the interaction is direct. Does not interact with ARL4A (By similarity).</text>
</comment>
<comment type="subcellular location">
    <subcellularLocation>
        <location evidence="1">Cell membrane</location>
    </subcellularLocation>
    <subcellularLocation>
        <location evidence="1">Cytoplasm</location>
    </subcellularLocation>
    <subcellularLocation>
        <location evidence="1">Nucleus</location>
        <location evidence="1">Nucleolus</location>
    </subcellularLocation>
    <text evidence="1">Localization in the nucleolus is dependent by nucleotide binding.</text>
</comment>
<comment type="tissue specificity">
    <text evidence="3">Expressed strongly in testis and liver. Expressed slightly in heart, spleen, lung and kidney.</text>
</comment>
<comment type="developmental stage">
    <text>Expressed strongly in embryo at 7 dpc. Expressed slightly in embryo at 11, 15 and 17 dpc.</text>
</comment>
<comment type="PTM">
    <text evidence="1">Myristoylated.</text>
</comment>
<comment type="similarity">
    <text evidence="4">Belongs to the small GTPase superfamily. Arf family.</text>
</comment>
<evidence type="ECO:0000250" key="1"/>
<evidence type="ECO:0000255" key="2"/>
<evidence type="ECO:0000269" key="3">
    <source>
    </source>
</evidence>
<evidence type="ECO:0000305" key="4"/>
<sequence>MGNGLSDQTSILSSLPSFQSFHIVILGLDCAGKTTVLYRLQFNEFVNTVPTKGFNTEKIKVTLGNSKTVTFHFWDVGGQEKLRPLWKSYTRCTDGIVFVVDSVDVERMEEAKTELHKITRISENQGVPVLIVANKQDLRNSLSLSEIEKLLAMGELSSSTPWHLQPTCAIIGDGLKEGLEKLHDMIIKRRKMLRQQKKKR</sequence>
<proteinExistence type="evidence at transcript level"/>
<organism>
    <name type="scientific">Rattus norvegicus</name>
    <name type="common">Rat</name>
    <dbReference type="NCBI Taxonomy" id="10116"/>
    <lineage>
        <taxon>Eukaryota</taxon>
        <taxon>Metazoa</taxon>
        <taxon>Chordata</taxon>
        <taxon>Craniata</taxon>
        <taxon>Vertebrata</taxon>
        <taxon>Euteleostomi</taxon>
        <taxon>Mammalia</taxon>
        <taxon>Eutheria</taxon>
        <taxon>Euarchontoglires</taxon>
        <taxon>Glires</taxon>
        <taxon>Rodentia</taxon>
        <taxon>Myomorpha</taxon>
        <taxon>Muroidea</taxon>
        <taxon>Muridae</taxon>
        <taxon>Murinae</taxon>
        <taxon>Rattus</taxon>
    </lineage>
</organism>
<accession>P61214</accession>
<accession>P41275</accession>